<organism>
    <name type="scientific">Drosophila yakuba</name>
    <name type="common">Fruit fly</name>
    <dbReference type="NCBI Taxonomy" id="7245"/>
    <lineage>
        <taxon>Eukaryota</taxon>
        <taxon>Metazoa</taxon>
        <taxon>Ecdysozoa</taxon>
        <taxon>Arthropoda</taxon>
        <taxon>Hexapoda</taxon>
        <taxon>Insecta</taxon>
        <taxon>Pterygota</taxon>
        <taxon>Neoptera</taxon>
        <taxon>Endopterygota</taxon>
        <taxon>Diptera</taxon>
        <taxon>Brachycera</taxon>
        <taxon>Muscomorpha</taxon>
        <taxon>Ephydroidea</taxon>
        <taxon>Drosophilidae</taxon>
        <taxon>Drosophila</taxon>
        <taxon>Sophophora</taxon>
    </lineage>
</organism>
<name>WUHO_DROYA</name>
<sequence length="425" mass="46647">MCTTISFAEPEIVLGHGRRVLFVNPDDLQIFKEIELPPDLGLKGLGSQSQESCPAAAAATSTSTATATCAGKEPGGKEQQLTKQPEEGGTTASGSGVTSTSVQNVTYSPDGQLLAVTTSGGQKALLLYRSRPENARLLSTRPLARAASAVRFCSDSSSVLVTDKTGDCYQYDCVELEAPPRLLLGHLSVVYDILWSEDQQHIITCDRDDKIRVTNYPATFDIHSYCLGHREFVSGLALLTDKHIASASGDKTLRVWNYIQGKELLQHELPAPAVRLLVRQLEPEKIFQAAVLFYEHVDALGLYRLERSSDDIWSVTATQLVCAEAGSWSISNFTLTSDRIYVTGAENERLSLRVYDIATGQPATSGVPEGWVKMVLDGLGANEEGAPPFIPEDLSVWFKKRFDNVSDYLERKKRRIEEQQQQKCG</sequence>
<evidence type="ECO:0000250" key="1">
    <source>
        <dbReference type="UniProtKB" id="Q9W415"/>
    </source>
</evidence>
<evidence type="ECO:0000255" key="2">
    <source>
        <dbReference type="HAMAP-Rule" id="MF_03056"/>
    </source>
</evidence>
<evidence type="ECO:0000256" key="3">
    <source>
        <dbReference type="SAM" id="MobiDB-lite"/>
    </source>
</evidence>
<gene>
    <name evidence="2" type="primary">wuho</name>
    <name type="ORF">GE16741</name>
</gene>
<protein>
    <recommendedName>
        <fullName evidence="2">tRNA (guanine-N(7)-)-methyltransferase non-catalytic subunit wuho</fullName>
    </recommendedName>
</protein>
<accession>B4PYR0</accession>
<feature type="chain" id="PRO_0000370551" description="tRNA (guanine-N(7)-)-methyltransferase non-catalytic subunit wuho">
    <location>
        <begin position="1"/>
        <end position="425"/>
    </location>
</feature>
<feature type="repeat" description="WD 1">
    <location>
        <begin position="97"/>
        <end position="138"/>
    </location>
</feature>
<feature type="repeat" description="WD 2">
    <location>
        <begin position="142"/>
        <end position="181"/>
    </location>
</feature>
<feature type="repeat" description="WD 3">
    <location>
        <begin position="185"/>
        <end position="224"/>
    </location>
</feature>
<feature type="repeat" description="WD 4">
    <location>
        <begin position="228"/>
        <end position="266"/>
    </location>
</feature>
<feature type="repeat" description="WD 5">
    <location>
        <begin position="325"/>
        <end position="365"/>
    </location>
</feature>
<feature type="region of interest" description="Disordered" evidence="3">
    <location>
        <begin position="67"/>
        <end position="102"/>
    </location>
</feature>
<feature type="compositionally biased region" description="Low complexity" evidence="3">
    <location>
        <begin position="88"/>
        <end position="102"/>
    </location>
</feature>
<keyword id="KW-0963">Cytoplasm</keyword>
<keyword id="KW-0217">Developmental protein</keyword>
<keyword id="KW-0221">Differentiation</keyword>
<keyword id="KW-0539">Nucleus</keyword>
<keyword id="KW-0896">Oogenesis</keyword>
<keyword id="KW-0677">Repeat</keyword>
<keyword id="KW-0744">Spermatogenesis</keyword>
<keyword id="KW-0819">tRNA processing</keyword>
<keyword id="KW-0853">WD repeat</keyword>
<dbReference type="EMBL" id="CM000162">
    <property type="protein sequence ID" value="EDX00996.1"/>
    <property type="molecule type" value="Genomic_DNA"/>
</dbReference>
<dbReference type="SMR" id="B4PYR0"/>
<dbReference type="EnsemblMetazoa" id="FBtr0263259">
    <property type="protein sequence ID" value="FBpp0261751"/>
    <property type="gene ID" value="FBgn0234237"/>
</dbReference>
<dbReference type="EnsemblMetazoa" id="XM_002099852.4">
    <property type="protein sequence ID" value="XP_002099888.1"/>
    <property type="gene ID" value="LOC6524016"/>
</dbReference>
<dbReference type="GeneID" id="6524016"/>
<dbReference type="KEGG" id="dya:Dyak_GE16741"/>
<dbReference type="CTD" id="31566"/>
<dbReference type="eggNOG" id="KOG3914">
    <property type="taxonomic scope" value="Eukaryota"/>
</dbReference>
<dbReference type="HOGENOM" id="CLU_054270_0_0_1"/>
<dbReference type="OMA" id="SVWFKKR"/>
<dbReference type="OrthoDB" id="371245at2759"/>
<dbReference type="PhylomeDB" id="B4PYR0"/>
<dbReference type="UniPathway" id="UPA00989"/>
<dbReference type="Proteomes" id="UP000002282">
    <property type="component" value="Chromosome X"/>
</dbReference>
<dbReference type="GO" id="GO:0005829">
    <property type="term" value="C:cytosol"/>
    <property type="evidence" value="ECO:0007669"/>
    <property type="project" value="TreeGrafter"/>
</dbReference>
<dbReference type="GO" id="GO:0001674">
    <property type="term" value="C:female germ cell nucleus"/>
    <property type="evidence" value="ECO:0000250"/>
    <property type="project" value="UniProtKB"/>
</dbReference>
<dbReference type="GO" id="GO:0001673">
    <property type="term" value="C:male germ cell nucleus"/>
    <property type="evidence" value="ECO:0000250"/>
    <property type="project" value="UniProtKB"/>
</dbReference>
<dbReference type="GO" id="GO:0005634">
    <property type="term" value="C:nucleus"/>
    <property type="evidence" value="ECO:0000250"/>
    <property type="project" value="UniProtKB"/>
</dbReference>
<dbReference type="GO" id="GO:0106143">
    <property type="term" value="C:tRNA (m7G46) methyltransferase complex"/>
    <property type="evidence" value="ECO:0007669"/>
    <property type="project" value="EnsemblMetazoa"/>
</dbReference>
<dbReference type="GO" id="GO:0048477">
    <property type="term" value="P:oogenesis"/>
    <property type="evidence" value="ECO:0000250"/>
    <property type="project" value="UniProtKB"/>
</dbReference>
<dbReference type="GO" id="GO:0007283">
    <property type="term" value="P:spermatogenesis"/>
    <property type="evidence" value="ECO:0000250"/>
    <property type="project" value="UniProtKB"/>
</dbReference>
<dbReference type="GO" id="GO:0106004">
    <property type="term" value="P:tRNA (guanine-N7)-methylation"/>
    <property type="evidence" value="ECO:0007669"/>
    <property type="project" value="UniProtKB-UniRule"/>
</dbReference>
<dbReference type="FunFam" id="2.130.10.10:FF:002224">
    <property type="entry name" value="tRNA (guanine-N(7)-)-methyltransferase non-catalytic subunit wuho"/>
    <property type="match status" value="1"/>
</dbReference>
<dbReference type="Gene3D" id="2.130.10.10">
    <property type="entry name" value="YVTN repeat-like/Quinoprotein amine dehydrogenase"/>
    <property type="match status" value="1"/>
</dbReference>
<dbReference type="HAMAP" id="MF_03056">
    <property type="entry name" value="TRM82"/>
    <property type="match status" value="1"/>
</dbReference>
<dbReference type="InterPro" id="IPR011044">
    <property type="entry name" value="Quino_amine_DH_bsu"/>
</dbReference>
<dbReference type="InterPro" id="IPR028884">
    <property type="entry name" value="Trm82"/>
</dbReference>
<dbReference type="InterPro" id="IPR015943">
    <property type="entry name" value="WD40/YVTN_repeat-like_dom_sf"/>
</dbReference>
<dbReference type="InterPro" id="IPR001680">
    <property type="entry name" value="WD40_rpt"/>
</dbReference>
<dbReference type="PANTHER" id="PTHR16288:SF0">
    <property type="entry name" value="TRNA (GUANINE-N(7)-)-METHYLTRANSFERASE NON-CATALYTIC SUBUNIT WDR4"/>
    <property type="match status" value="1"/>
</dbReference>
<dbReference type="PANTHER" id="PTHR16288">
    <property type="entry name" value="WD40 REPEAT PROTEIN 4"/>
    <property type="match status" value="1"/>
</dbReference>
<dbReference type="Pfam" id="PF00400">
    <property type="entry name" value="WD40"/>
    <property type="match status" value="2"/>
</dbReference>
<dbReference type="SMART" id="SM00320">
    <property type="entry name" value="WD40"/>
    <property type="match status" value="4"/>
</dbReference>
<dbReference type="SUPFAM" id="SSF50969">
    <property type="entry name" value="YVTN repeat-like/Quinoprotein amine dehydrogenase"/>
    <property type="match status" value="1"/>
</dbReference>
<dbReference type="PROSITE" id="PS50082">
    <property type="entry name" value="WD_REPEATS_2"/>
    <property type="match status" value="1"/>
</dbReference>
<dbReference type="PROSITE" id="PS50294">
    <property type="entry name" value="WD_REPEATS_REGION"/>
    <property type="match status" value="1"/>
</dbReference>
<comment type="function">
    <text evidence="1 2">Required for the Mettl1-dependent formation of N(7)-methylguanine at position 46 (m7G46) in tRNA (By similarity). In the Mettl1-wuho methyltransferase complex, it is required to stabilize and induce conformational changes of the catalytic subunit (By similarity). Required for binding of nanos mRNA and repression of translation by the mei-P26-bgcn-bam-sxl complex. May cooperate with mei-P26 and nanos to derepress the BMP signaling pathway. May cooperate with mei-P26 to suppress expression of a subset of microRNAs. May cooperate with mei-P26 to regulate bam expression levels in germline cells during gametogenesis. Required to promote mitosis to meiosis transition during gametogenesis. May regulate germline cell division in part by regulating ribosome biogenesis (By similarity).</text>
</comment>
<comment type="pathway">
    <text evidence="2">tRNA modification; N(7)-methylguanine-tRNA biosynthesis.</text>
</comment>
<comment type="subunit">
    <text evidence="1 2">Forms a heterodimer with the catalytic subunit Mettl1 (By similarity). Interacts with mei-P26 and weakly interacts with bgcn; required for the function or formation of the mei-P26-bgcn-bam-sxl complex. Interacts with nanos; may be involved in mei-P26-dependent derepression of the BMP signaling pathway. Interacts with Myc; the interaction may be mediated by mei-P26 and may be involved in the regulation of ribosome biogenesis (By similarity).</text>
</comment>
<comment type="subcellular location">
    <subcellularLocation>
        <location evidence="1 2">Nucleus</location>
    </subcellularLocation>
    <subcellularLocation>
        <location evidence="1">Cytoplasm</location>
    </subcellularLocation>
    <text evidence="1">Localized to the nuclei of nurse cells, follicle cells and oocytes at early stages, from germarium to stage 4 egg chambers. Also present in the nuclei of spermatocytes and in the apical cells of the testes. In the cytoplasm of all germline and somatic cells of the ovary.</text>
</comment>
<comment type="tissue specificity">
    <text evidence="1">In testis, it is present at high level in hub cells, a niche for germline stem cells of testis. Ubiquitously expressed in all testicular cells throughout spermatogenesis. Ubiquitously expressed in all germline and somatic cells of the ovary.</text>
</comment>
<comment type="miscellaneous">
    <text evidence="1">Wuho means 'no progeny' in Chinese.</text>
</comment>
<comment type="similarity">
    <text evidence="2">Belongs to the WD repeat TRM82 family.</text>
</comment>
<reference key="1">
    <citation type="journal article" date="2007" name="Nature">
        <title>Evolution of genes and genomes on the Drosophila phylogeny.</title>
        <authorList>
            <consortium name="Drosophila 12 genomes consortium"/>
        </authorList>
    </citation>
    <scope>NUCLEOTIDE SEQUENCE [LARGE SCALE GENOMIC DNA]</scope>
    <source>
        <strain>Tai18E2 / Tucson 14021-0261.01</strain>
    </source>
</reference>
<proteinExistence type="inferred from homology"/>